<feature type="chain" id="PRO_1000005494" description="Large ribosomal subunit protein uL10">
    <location>
        <begin position="1"/>
        <end position="165"/>
    </location>
</feature>
<feature type="modified residue" description="N6-acetyllysine" evidence="1">
    <location>
        <position position="37"/>
    </location>
</feature>
<feature type="modified residue" description="N6-acetyllysine" evidence="1">
    <location>
        <position position="105"/>
    </location>
</feature>
<protein>
    <recommendedName>
        <fullName evidence="1">Large ribosomal subunit protein uL10</fullName>
    </recommendedName>
    <alternativeName>
        <fullName evidence="2">50S ribosomal protein L10</fullName>
    </alternativeName>
</protein>
<sequence length="165" mass="17712">MALNLQDKQAIVAEVSEVAKGALSAVVADSRGVTVDKMTELRKAGREAGVYMRVVRNTLLRRAVEGTPFECLKDAFVGPTLIAYSMEHPGAAARLFKEFAKANAKFEVKAAAFEGELIPASQIDRLATLPTYEEAIARLMATMKEASAGKLVRTLAAVRDAKEAA</sequence>
<comment type="function">
    <text evidence="1">Forms part of the ribosomal stalk, playing a central role in the interaction of the ribosome with GTP-bound translation factors.</text>
</comment>
<comment type="subunit">
    <text evidence="1">Part of the ribosomal stalk of the 50S ribosomal subunit. The N-terminus interacts with L11 and the large rRNA to form the base of the stalk. The C-terminus forms an elongated spine to which L12 dimers bind in a sequential fashion forming a multimeric L10(L12)X complex.</text>
</comment>
<comment type="similarity">
    <text evidence="1">Belongs to the universal ribosomal protein uL10 family.</text>
</comment>
<evidence type="ECO:0000255" key="1">
    <source>
        <dbReference type="HAMAP-Rule" id="MF_00362"/>
    </source>
</evidence>
<evidence type="ECO:0000305" key="2"/>
<accession>Q1R5V0</accession>
<organism>
    <name type="scientific">Escherichia coli (strain UTI89 / UPEC)</name>
    <dbReference type="NCBI Taxonomy" id="364106"/>
    <lineage>
        <taxon>Bacteria</taxon>
        <taxon>Pseudomonadati</taxon>
        <taxon>Pseudomonadota</taxon>
        <taxon>Gammaproteobacteria</taxon>
        <taxon>Enterobacterales</taxon>
        <taxon>Enterobacteriaceae</taxon>
        <taxon>Escherichia</taxon>
    </lineage>
</organism>
<gene>
    <name evidence="1" type="primary">rplJ</name>
    <name type="ordered locus">UTI89_C3835</name>
</gene>
<name>RL10_ECOUT</name>
<keyword id="KW-0007">Acetylation</keyword>
<keyword id="KW-0687">Ribonucleoprotein</keyword>
<keyword id="KW-0689">Ribosomal protein</keyword>
<keyword id="KW-0694">RNA-binding</keyword>
<keyword id="KW-0699">rRNA-binding</keyword>
<proteinExistence type="inferred from homology"/>
<dbReference type="EMBL" id="CP000243">
    <property type="protein sequence ID" value="ABE09264.1"/>
    <property type="molecule type" value="Genomic_DNA"/>
</dbReference>
<dbReference type="RefSeq" id="WP_001207201.1">
    <property type="nucleotide sequence ID" value="NZ_CP064825.1"/>
</dbReference>
<dbReference type="SMR" id="Q1R5V0"/>
<dbReference type="GeneID" id="93777909"/>
<dbReference type="KEGG" id="eci:UTI89_C3835"/>
<dbReference type="HOGENOM" id="CLU_092227_0_2_6"/>
<dbReference type="Proteomes" id="UP000001952">
    <property type="component" value="Chromosome"/>
</dbReference>
<dbReference type="GO" id="GO:0015934">
    <property type="term" value="C:large ribosomal subunit"/>
    <property type="evidence" value="ECO:0007669"/>
    <property type="project" value="InterPro"/>
</dbReference>
<dbReference type="GO" id="GO:0070180">
    <property type="term" value="F:large ribosomal subunit rRNA binding"/>
    <property type="evidence" value="ECO:0007669"/>
    <property type="project" value="UniProtKB-UniRule"/>
</dbReference>
<dbReference type="GO" id="GO:0003735">
    <property type="term" value="F:structural constituent of ribosome"/>
    <property type="evidence" value="ECO:0007669"/>
    <property type="project" value="InterPro"/>
</dbReference>
<dbReference type="GO" id="GO:0006412">
    <property type="term" value="P:translation"/>
    <property type="evidence" value="ECO:0007669"/>
    <property type="project" value="UniProtKB-UniRule"/>
</dbReference>
<dbReference type="CDD" id="cd05797">
    <property type="entry name" value="Ribosomal_L10"/>
    <property type="match status" value="1"/>
</dbReference>
<dbReference type="FunFam" id="3.30.70.1730:FF:000001">
    <property type="entry name" value="50S ribosomal protein L10"/>
    <property type="match status" value="1"/>
</dbReference>
<dbReference type="Gene3D" id="3.30.70.1730">
    <property type="match status" value="1"/>
</dbReference>
<dbReference type="Gene3D" id="6.10.250.2350">
    <property type="match status" value="1"/>
</dbReference>
<dbReference type="HAMAP" id="MF_00362">
    <property type="entry name" value="Ribosomal_uL10"/>
    <property type="match status" value="1"/>
</dbReference>
<dbReference type="InterPro" id="IPR001790">
    <property type="entry name" value="Ribosomal_uL10"/>
</dbReference>
<dbReference type="InterPro" id="IPR043141">
    <property type="entry name" value="Ribosomal_uL10-like_sf"/>
</dbReference>
<dbReference type="InterPro" id="IPR022973">
    <property type="entry name" value="Ribosomal_uL10_bac"/>
</dbReference>
<dbReference type="InterPro" id="IPR047865">
    <property type="entry name" value="Ribosomal_uL10_bac_type"/>
</dbReference>
<dbReference type="InterPro" id="IPR002363">
    <property type="entry name" value="Ribosomal_uL10_CS_bac"/>
</dbReference>
<dbReference type="NCBIfam" id="NF000955">
    <property type="entry name" value="PRK00099.1-1"/>
    <property type="match status" value="1"/>
</dbReference>
<dbReference type="PANTHER" id="PTHR11560">
    <property type="entry name" value="39S RIBOSOMAL PROTEIN L10, MITOCHONDRIAL"/>
    <property type="match status" value="1"/>
</dbReference>
<dbReference type="Pfam" id="PF00466">
    <property type="entry name" value="Ribosomal_L10"/>
    <property type="match status" value="1"/>
</dbReference>
<dbReference type="SUPFAM" id="SSF160369">
    <property type="entry name" value="Ribosomal protein L10-like"/>
    <property type="match status" value="1"/>
</dbReference>
<dbReference type="PROSITE" id="PS01109">
    <property type="entry name" value="RIBOSOMAL_L10"/>
    <property type="match status" value="1"/>
</dbReference>
<reference key="1">
    <citation type="journal article" date="2006" name="Proc. Natl. Acad. Sci. U.S.A.">
        <title>Identification of genes subject to positive selection in uropathogenic strains of Escherichia coli: a comparative genomics approach.</title>
        <authorList>
            <person name="Chen S.L."/>
            <person name="Hung C.-S."/>
            <person name="Xu J."/>
            <person name="Reigstad C.S."/>
            <person name="Magrini V."/>
            <person name="Sabo A."/>
            <person name="Blasiar D."/>
            <person name="Bieri T."/>
            <person name="Meyer R.R."/>
            <person name="Ozersky P."/>
            <person name="Armstrong J.R."/>
            <person name="Fulton R.S."/>
            <person name="Latreille J.P."/>
            <person name="Spieth J."/>
            <person name="Hooton T.M."/>
            <person name="Mardis E.R."/>
            <person name="Hultgren S.J."/>
            <person name="Gordon J.I."/>
        </authorList>
    </citation>
    <scope>NUCLEOTIDE SEQUENCE [LARGE SCALE GENOMIC DNA]</scope>
    <source>
        <strain>UTI89 / UPEC</strain>
    </source>
</reference>